<keyword id="KW-1167">Clathrin- and caveolin-independent endocytosis of virus by host</keyword>
<keyword id="KW-1165">Clathrin-mediated endocytosis of virus by host</keyword>
<keyword id="KW-1015">Disulfide bond</keyword>
<keyword id="KW-1170">Fusion of virus membrane with host endosomal membrane</keyword>
<keyword id="KW-1168">Fusion of virus membrane with host membrane</keyword>
<keyword id="KW-0325">Glycoprotein</keyword>
<keyword id="KW-0348">Hemagglutinin</keyword>
<keyword id="KW-1032">Host cell membrane</keyword>
<keyword id="KW-1043">Host membrane</keyword>
<keyword id="KW-0945">Host-virus interaction</keyword>
<keyword id="KW-0449">Lipoprotein</keyword>
<keyword id="KW-0472">Membrane</keyword>
<keyword id="KW-0564">Palmitate</keyword>
<keyword id="KW-0732">Signal</keyword>
<keyword id="KW-0812">Transmembrane</keyword>
<keyword id="KW-1133">Transmembrane helix</keyword>
<keyword id="KW-1161">Viral attachment to host cell</keyword>
<keyword id="KW-0261">Viral envelope protein</keyword>
<keyword id="KW-1162">Viral penetration into host cytoplasm</keyword>
<keyword id="KW-0946">Virion</keyword>
<keyword id="KW-1164">Virus endocytosis by host</keyword>
<keyword id="KW-1160">Virus entry into host cell</keyword>
<comment type="function">
    <text evidence="2">Binds to sialic acid-containing receptors on the cell surface, bringing about the attachment of the virus particle to the cell. This attachment induces virion internalization either through clathrin-dependent endocytosis or through clathrin- and caveolin-independent pathway. Plays a major role in the determination of host range restriction and virulence. Class I viral fusion protein. Responsible for penetration of the virus into the cell cytoplasm by mediating the fusion of the membrane of the endocytosed virus particle with the endosomal membrane. Low pH in endosomes induces an irreversible conformational change in HA2, releasing the fusion hydrophobic peptide. Several trimers are required to form a competent fusion pore.</text>
</comment>
<comment type="subunit">
    <text evidence="1">Homotrimer of disulfide-linked HA1-HA2. Interacts with human CACNA1C.</text>
</comment>
<comment type="subcellular location">
    <subcellularLocation>
        <location evidence="2">Virion membrane</location>
        <topology evidence="2">Single-pass type I membrane protein</topology>
    </subcellularLocation>
    <subcellularLocation>
        <location evidence="2">Host apical cell membrane</location>
        <topology evidence="2">Single-pass type I membrane protein</topology>
    </subcellularLocation>
    <text evidence="2">Targeted to the apical plasma membrane in epithelial polarized cells through a signal present in the transmembrane domain. Associated with glycosphingolipid- and cholesterol-enriched detergent-resistant lipid rafts.</text>
</comment>
<comment type="PTM">
    <text evidence="2">Palmitoylated.</text>
</comment>
<comment type="PTM">
    <text evidence="2">In natural infection, inactive HA is matured into HA1 and HA2 outside the cell by one or more trypsin-like, arginine-specific endoprotease secreted by the bronchial epithelial cells. One identified protease that may be involved in this process is secreted in lungs by club cells.</text>
</comment>
<comment type="miscellaneous">
    <text>Major glycoprotein, comprises over 80% of the envelope proteins present in virus particle.</text>
</comment>
<comment type="miscellaneous">
    <text>The extent of infection into host organism is determined by HA. Influenza viruses bud from the apical surface of polarized epithelial cells (e.g. bronchial epithelial cells) into lumen of lungs and are therefore usually pneumotropic. The reason is that HA is cleaved by tryptase clara which is restricted to lungs. However, HAs of H5 and H7 pantropic avian viruses subtypes can be cleaved by furin and subtilisin-type enzymes, allowing the virus to grow in other organs than lungs.</text>
</comment>
<comment type="miscellaneous">
    <text evidence="3">The influenza A genome consist of 8 RNA segments. Genetic variation of hemagglutinin and/or neuraminidase genes results in the emergence of new influenza strains. The mechanism of variation can be the result of point mutations or the result of genetic reassortment between segments of two different strains.</text>
</comment>
<comment type="similarity">
    <text evidence="2">Belongs to the influenza viruses hemagglutinin family.</text>
</comment>
<sequence length="566" mass="63517">MKAKLLVLLCALSATDADTICIGYHANNSTDTVDTVLEKNVTVTHSVNLLEDSHNGKLCRLKGIAPLQLGKCSIAGWILGNPECESLVSKKSWSYIAETPNSENGTCYPGYFADYEELREQLSSVSSFERFEIFPKESSWPKHNVTRGVTASCSHKGKSSFYRNLLWLTEKNGSYPNLSKSYVNNKEKEVLVLWGVHHPSNIENQKTIYRKENAYVSVVSSHYNRRFTPEIAKRPKVRDQEGRINYYWTLLEPGDTIIFEANGNLIAPWYAFALSRGFGSGIITSNASIDECDAKCQTPQGAINSSLPFQNVHPVTIGECPKYVRSTKLRMVTGLRNIPSIQSRGLFGAIAGFIEGGWTGMIDGWYGYHHQNEQGSGYAADQKSTQNAINGITNKVNSVIEKMNTQFTAVGKEFNKLEKRMENLNKKVDDGFLDIWTYNAELLVLLENERTLDFHDSNVKNLYEKVKSQLKNNAKEIGNGCFEFYHKCNNECMESVKNGTYDYPKYSEESKLNREKIDGVKLESMGVYQILAIYSTVASSLVLLVSLGAISFWMCSNGSLQCRICI</sequence>
<feature type="signal peptide" evidence="2">
    <location>
        <begin position="1"/>
        <end position="17"/>
    </location>
</feature>
<feature type="chain" id="PRO_0000440490" description="Hemagglutinin" evidence="2">
    <location>
        <begin position="18"/>
        <end position="566"/>
    </location>
</feature>
<feature type="chain" id="PRO_0000372891" description="Hemagglutinin HA1 chain" evidence="2">
    <location>
        <begin position="18"/>
        <end position="343"/>
    </location>
</feature>
<feature type="chain" id="PRO_0000372892" description="Hemagglutinin HA2 chain" evidence="2">
    <location>
        <begin position="345"/>
        <end position="566"/>
    </location>
</feature>
<feature type="topological domain" description="Extracellular" evidence="2">
    <location>
        <begin position="18"/>
        <end position="529"/>
    </location>
</feature>
<feature type="transmembrane region" description="Helical" evidence="2">
    <location>
        <begin position="530"/>
        <end position="550"/>
    </location>
</feature>
<feature type="topological domain" description="Cytoplasmic" evidence="2">
    <location>
        <begin position="551"/>
        <end position="566"/>
    </location>
</feature>
<feature type="site" description="Cleavage; by host" evidence="2">
    <location>
        <begin position="344"/>
        <end position="345"/>
    </location>
</feature>
<feature type="lipid moiety-binding region" description="S-palmitoyl cysteine; by host" evidence="2">
    <location>
        <position position="555"/>
    </location>
</feature>
<feature type="lipid moiety-binding region" description="S-palmitoyl cysteine; by host" evidence="2">
    <location>
        <position position="562"/>
    </location>
</feature>
<feature type="lipid moiety-binding region" description="S-palmitoyl cysteine; by host" evidence="2">
    <location>
        <position position="565"/>
    </location>
</feature>
<feature type="glycosylation site" description="N-linked (GlcNAc...) asparagine; by host" evidence="2">
    <location>
        <position position="27"/>
    </location>
</feature>
<feature type="glycosylation site" description="N-linked (GlcNAc...) asparagine; by host" evidence="2">
    <location>
        <position position="28"/>
    </location>
</feature>
<feature type="glycosylation site" description="N-linked (GlcNAc...) asparagine; by host" evidence="2">
    <location>
        <position position="40"/>
    </location>
</feature>
<feature type="glycosylation site" description="N-linked (GlcNAc...) asparagine; by host" evidence="2">
    <location>
        <position position="104"/>
    </location>
</feature>
<feature type="glycosylation site" description="N-linked (GlcNAc...) asparagine; by host" evidence="2">
    <location>
        <position position="144"/>
    </location>
</feature>
<feature type="glycosylation site" description="N-linked (GlcNAc...) asparagine; by host" evidence="2">
    <location>
        <position position="172"/>
    </location>
</feature>
<feature type="glycosylation site" description="N-linked (GlcNAc...) asparagine; by host" evidence="2">
    <location>
        <position position="177"/>
    </location>
</feature>
<feature type="glycosylation site" description="N-linked (GlcNAc...) asparagine; by host" evidence="2">
    <location>
        <position position="286"/>
    </location>
</feature>
<feature type="glycosylation site" description="N-linked (GlcNAc...) asparagine; by host" evidence="2">
    <location>
        <position position="304"/>
    </location>
</feature>
<feature type="glycosylation site" description="N-linked (GlcNAc...) asparagine; by host" evidence="2">
    <location>
        <position position="498"/>
    </location>
</feature>
<feature type="disulfide bond" description="Interchain (between HA1 and HA2 chains)" evidence="2">
    <location>
        <begin position="21"/>
        <end position="481"/>
    </location>
</feature>
<feature type="disulfide bond" evidence="2">
    <location>
        <begin position="59"/>
        <end position="292"/>
    </location>
</feature>
<feature type="disulfide bond" evidence="2">
    <location>
        <begin position="72"/>
        <end position="84"/>
    </location>
</feature>
<feature type="disulfide bond" evidence="2">
    <location>
        <begin position="107"/>
        <end position="153"/>
    </location>
</feature>
<feature type="disulfide bond" evidence="2">
    <location>
        <begin position="296"/>
        <end position="320"/>
    </location>
</feature>
<feature type="disulfide bond" evidence="2">
    <location>
        <begin position="488"/>
        <end position="492"/>
    </location>
</feature>
<gene>
    <name evidence="2" type="primary">HA</name>
</gene>
<accession>A4GCJ7</accession>
<reference key="1">
    <citation type="submission" date="2007-03" db="EMBL/GenBank/DDBJ databases">
        <title>The NIAID influenza genome sequencing project.</title>
        <authorList>
            <person name="Ghedin E."/>
            <person name="Spiro D."/>
            <person name="Miller N."/>
            <person name="Zaborsky J."/>
            <person name="Feldblyum T."/>
            <person name="Subbu V."/>
            <person name="Shumway M."/>
            <person name="Sparenborg J."/>
            <person name="Groveman L."/>
            <person name="Halpin R."/>
            <person name="Sitz J."/>
            <person name="Koo H."/>
            <person name="Salzberg S.L."/>
            <person name="Webster R.G."/>
            <person name="Hoffmann E."/>
            <person name="Krauss S."/>
            <person name="Naeve C."/>
            <person name="Bao Y."/>
            <person name="Bolotov P."/>
            <person name="Dernovoy D."/>
            <person name="Kiryutin B."/>
            <person name="Lipman D.J."/>
            <person name="Tatusova T."/>
        </authorList>
    </citation>
    <scope>NUCLEOTIDE SEQUENCE [GENOMIC RNA]</scope>
</reference>
<reference key="2">
    <citation type="submission" date="2007-03" db="EMBL/GenBank/DDBJ databases">
        <authorList>
            <consortium name="The NIAID Influenza Genome Sequencing Consortium"/>
        </authorList>
    </citation>
    <scope>NUCLEOTIDE SEQUENCE [GENOMIC RNA]</scope>
</reference>
<dbReference type="EMBL" id="CY020453">
    <property type="protein sequence ID" value="ABO38362.1"/>
    <property type="molecule type" value="Viral_cRNA"/>
</dbReference>
<dbReference type="BMRB" id="A4GCJ7"/>
<dbReference type="SMR" id="A4GCJ7"/>
<dbReference type="GlyCosmos" id="A4GCJ7">
    <property type="glycosylation" value="10 sites, No reported glycans"/>
</dbReference>
<dbReference type="PRO" id="PR:A4GCJ7"/>
<dbReference type="Proteomes" id="UP000008580">
    <property type="component" value="Genome"/>
</dbReference>
<dbReference type="GO" id="GO:0020002">
    <property type="term" value="C:host cell plasma membrane"/>
    <property type="evidence" value="ECO:0007669"/>
    <property type="project" value="UniProtKB-SubCell"/>
</dbReference>
<dbReference type="GO" id="GO:0016020">
    <property type="term" value="C:membrane"/>
    <property type="evidence" value="ECO:0007669"/>
    <property type="project" value="UniProtKB-UniRule"/>
</dbReference>
<dbReference type="GO" id="GO:0019031">
    <property type="term" value="C:viral envelope"/>
    <property type="evidence" value="ECO:0007669"/>
    <property type="project" value="UniProtKB-UniRule"/>
</dbReference>
<dbReference type="GO" id="GO:0055036">
    <property type="term" value="C:virion membrane"/>
    <property type="evidence" value="ECO:0007669"/>
    <property type="project" value="UniProtKB-SubCell"/>
</dbReference>
<dbReference type="GO" id="GO:0046789">
    <property type="term" value="F:host cell surface receptor binding"/>
    <property type="evidence" value="ECO:0007669"/>
    <property type="project" value="UniProtKB-UniRule"/>
</dbReference>
<dbReference type="GO" id="GO:0075512">
    <property type="term" value="P:clathrin-dependent endocytosis of virus by host cell"/>
    <property type="evidence" value="ECO:0007669"/>
    <property type="project" value="UniProtKB-UniRule"/>
</dbReference>
<dbReference type="GO" id="GO:0039654">
    <property type="term" value="P:fusion of virus membrane with host endosome membrane"/>
    <property type="evidence" value="ECO:0007669"/>
    <property type="project" value="UniProtKB-UniRule"/>
</dbReference>
<dbReference type="GO" id="GO:0019064">
    <property type="term" value="P:fusion of virus membrane with host plasma membrane"/>
    <property type="evidence" value="ECO:0007669"/>
    <property type="project" value="InterPro"/>
</dbReference>
<dbReference type="GO" id="GO:0046761">
    <property type="term" value="P:viral budding from plasma membrane"/>
    <property type="evidence" value="ECO:0007669"/>
    <property type="project" value="UniProtKB-UniRule"/>
</dbReference>
<dbReference type="GO" id="GO:0019062">
    <property type="term" value="P:virion attachment to host cell"/>
    <property type="evidence" value="ECO:0007669"/>
    <property type="project" value="UniProtKB-KW"/>
</dbReference>
<dbReference type="FunFam" id="3.90.20.10:FF:000002">
    <property type="entry name" value="Hemagglutinin"/>
    <property type="match status" value="1"/>
</dbReference>
<dbReference type="Gene3D" id="3.90.20.10">
    <property type="match status" value="1"/>
</dbReference>
<dbReference type="Gene3D" id="3.90.209.20">
    <property type="match status" value="1"/>
</dbReference>
<dbReference type="Gene3D" id="2.10.77.10">
    <property type="entry name" value="Hemagglutinin Chain A, Domain 2"/>
    <property type="match status" value="1"/>
</dbReference>
<dbReference type="HAMAP" id="MF_04072">
    <property type="entry name" value="INFV_HEMA"/>
    <property type="match status" value="1"/>
</dbReference>
<dbReference type="InterPro" id="IPR008980">
    <property type="entry name" value="Capsid_hemagglutn"/>
</dbReference>
<dbReference type="InterPro" id="IPR013828">
    <property type="entry name" value="Hemagglutn_HA1_a/b_dom_sf"/>
</dbReference>
<dbReference type="InterPro" id="IPR000149">
    <property type="entry name" value="Hemagglutn_influenz_A"/>
</dbReference>
<dbReference type="InterPro" id="IPR001364">
    <property type="entry name" value="Hemagglutn_influenz_A/B"/>
</dbReference>
<dbReference type="Pfam" id="PF00509">
    <property type="entry name" value="Hemagglutinin"/>
    <property type="match status" value="1"/>
</dbReference>
<dbReference type="PRINTS" id="PR00330">
    <property type="entry name" value="HEMAGGLUTN1"/>
</dbReference>
<dbReference type="PRINTS" id="PR00329">
    <property type="entry name" value="HEMAGGLUTN12"/>
</dbReference>
<dbReference type="SUPFAM" id="SSF58064">
    <property type="entry name" value="Influenza hemagglutinin (stalk)"/>
    <property type="match status" value="1"/>
</dbReference>
<dbReference type="SUPFAM" id="SSF49818">
    <property type="entry name" value="Viral protein domain"/>
    <property type="match status" value="1"/>
</dbReference>
<name>HEMA_I80AA</name>
<organism>
    <name type="scientific">Influenza A virus (strain A/India/6263/1980 H1N1)</name>
    <dbReference type="NCBI Taxonomy" id="393562"/>
    <lineage>
        <taxon>Viruses</taxon>
        <taxon>Riboviria</taxon>
        <taxon>Orthornavirae</taxon>
        <taxon>Negarnaviricota</taxon>
        <taxon>Polyploviricotina</taxon>
        <taxon>Insthoviricetes</taxon>
        <taxon>Articulavirales</taxon>
        <taxon>Orthomyxoviridae</taxon>
        <taxon>Alphainfluenzavirus</taxon>
        <taxon>Alphainfluenzavirus influenzae</taxon>
        <taxon>Influenza A virus</taxon>
    </lineage>
</organism>
<organismHost>
    <name type="scientific">Aves</name>
    <dbReference type="NCBI Taxonomy" id="8782"/>
</organismHost>
<organismHost>
    <name type="scientific">Homo sapiens</name>
    <name type="common">Human</name>
    <dbReference type="NCBI Taxonomy" id="9606"/>
</organismHost>
<organismHost>
    <name type="scientific">Sus scrofa</name>
    <name type="common">Pig</name>
    <dbReference type="NCBI Taxonomy" id="9823"/>
</organismHost>
<evidence type="ECO:0000250" key="1">
    <source>
        <dbReference type="UniProtKB" id="Q289M7"/>
    </source>
</evidence>
<evidence type="ECO:0000255" key="2">
    <source>
        <dbReference type="HAMAP-Rule" id="MF_04072"/>
    </source>
</evidence>
<evidence type="ECO:0000305" key="3"/>
<protein>
    <recommendedName>
        <fullName evidence="2">Hemagglutinin</fullName>
    </recommendedName>
    <component>
        <recommendedName>
            <fullName evidence="2">Hemagglutinin HA1 chain</fullName>
        </recommendedName>
    </component>
    <component>
        <recommendedName>
            <fullName evidence="2">Hemagglutinin HA2 chain</fullName>
        </recommendedName>
    </component>
</protein>
<proteinExistence type="inferred from homology"/>